<sequence>MSSGIVLLIVAIVLVVIIAYLIAIIIRKRNDSLITKLEERKQNLFDLPVNDEIEEVKKLHLIGQSQTTFREWNQKWVDLSLNSFSDIENHIFEAENLNDTFNFIRAHSQINNIESQLNLAEEDIKAIREALAVLKEQEEKNSARVLHALEMYESLQASIEEGDSNFGITMPEIEKQLKNIEAEFSQFVTLNSSGDPVEASEILDRAEEHTIALGQMTEKIPAIVAKLEDDFPDQLDDLESGYRRLLEENYHFPEKNIEERFQEVREAIGNNSNELVSLDLDKAESENEAIQEKIDSLYDIFEREIRAHKNIVKSKKIIPAYLEHAKKNNEQLEAEIERLNHRYILNEKEELNVRDFNEEIASVEKDVLPIIENFDTQEKPFSVLEDKFDRAIKKLDLVEEGQLDVFNSLKNIENVEKTARQKLDSYINRLHAIKRFMEKRNLPGIPQDFLSVFFTTSAQLEALMDELNRARIHIETVNRMTEAATAAVENLEETAYRVVQNATLTEQLLQYSNRYRSFEPSVQESFDIALKLFETDYDYQGSFDEISYSLETVEPGVTDRFVSSYEKTRETIRF</sequence>
<evidence type="ECO:0000255" key="1">
    <source>
        <dbReference type="HAMAP-Rule" id="MF_00728"/>
    </source>
</evidence>
<comment type="function">
    <text evidence="1">Negative regulator of FtsZ ring formation; modulates the frequency and position of FtsZ ring formation. Inhibits FtsZ ring formation at polar sites. Interacts either with FtsZ or with one of its binding partners to promote depolymerization.</text>
</comment>
<comment type="subcellular location">
    <subcellularLocation>
        <location>Cell membrane</location>
        <topology>Single-pass membrane protein</topology>
    </subcellularLocation>
    <text evidence="1">Colocalized with FtsZ to the nascent septal site.</text>
</comment>
<comment type="similarity">
    <text evidence="1">Belongs to the EzrA family.</text>
</comment>
<gene>
    <name evidence="1" type="primary">ezrA</name>
    <name type="ordered locus">SMU_1276c</name>
</gene>
<keyword id="KW-0131">Cell cycle</keyword>
<keyword id="KW-0132">Cell division</keyword>
<keyword id="KW-1003">Cell membrane</keyword>
<keyword id="KW-0175">Coiled coil</keyword>
<keyword id="KW-0472">Membrane</keyword>
<keyword id="KW-1185">Reference proteome</keyword>
<keyword id="KW-0717">Septation</keyword>
<keyword id="KW-0812">Transmembrane</keyword>
<keyword id="KW-1133">Transmembrane helix</keyword>
<organism>
    <name type="scientific">Streptococcus mutans serotype c (strain ATCC 700610 / UA159)</name>
    <dbReference type="NCBI Taxonomy" id="210007"/>
    <lineage>
        <taxon>Bacteria</taxon>
        <taxon>Bacillati</taxon>
        <taxon>Bacillota</taxon>
        <taxon>Bacilli</taxon>
        <taxon>Lactobacillales</taxon>
        <taxon>Streptococcaceae</taxon>
        <taxon>Streptococcus</taxon>
    </lineage>
</organism>
<name>EZRA_STRMU</name>
<protein>
    <recommendedName>
        <fullName evidence="1">Septation ring formation regulator EzrA</fullName>
    </recommendedName>
</protein>
<feature type="chain" id="PRO_0000172888" description="Septation ring formation regulator EzrA">
    <location>
        <begin position="1"/>
        <end position="574"/>
    </location>
</feature>
<feature type="topological domain" description="Extracellular" evidence="1">
    <location>
        <begin position="1"/>
        <end position="7"/>
    </location>
</feature>
<feature type="transmembrane region" description="Helical" evidence="1">
    <location>
        <begin position="8"/>
        <end position="26"/>
    </location>
</feature>
<feature type="topological domain" description="Cytoplasmic" evidence="1">
    <location>
        <begin position="27"/>
        <end position="574"/>
    </location>
</feature>
<feature type="coiled-coil region" evidence="1">
    <location>
        <begin position="102"/>
        <end position="141"/>
    </location>
</feature>
<feature type="coiled-coil region" evidence="1">
    <location>
        <begin position="255"/>
        <end position="368"/>
    </location>
</feature>
<feature type="coiled-coil region" evidence="1">
    <location>
        <begin position="409"/>
        <end position="495"/>
    </location>
</feature>
<accession>Q8DTQ3</accession>
<reference key="1">
    <citation type="journal article" date="2002" name="Proc. Natl. Acad. Sci. U.S.A.">
        <title>Genome sequence of Streptococcus mutans UA159, a cariogenic dental pathogen.</title>
        <authorList>
            <person name="Ajdic D.J."/>
            <person name="McShan W.M."/>
            <person name="McLaughlin R.E."/>
            <person name="Savic G."/>
            <person name="Chang J."/>
            <person name="Carson M.B."/>
            <person name="Primeaux C."/>
            <person name="Tian R."/>
            <person name="Kenton S."/>
            <person name="Jia H.G."/>
            <person name="Lin S.P."/>
            <person name="Qian Y."/>
            <person name="Li S."/>
            <person name="Zhu H."/>
            <person name="Najar F.Z."/>
            <person name="Lai H."/>
            <person name="White J."/>
            <person name="Roe B.A."/>
            <person name="Ferretti J.J."/>
        </authorList>
    </citation>
    <scope>NUCLEOTIDE SEQUENCE [LARGE SCALE GENOMIC DNA]</scope>
    <source>
        <strain>ATCC 700610 / UA159</strain>
    </source>
</reference>
<proteinExistence type="inferred from homology"/>
<dbReference type="EMBL" id="AE014133">
    <property type="protein sequence ID" value="AAN58956.1"/>
    <property type="molecule type" value="Genomic_DNA"/>
</dbReference>
<dbReference type="RefSeq" id="NP_721650.1">
    <property type="nucleotide sequence ID" value="NC_004350.2"/>
</dbReference>
<dbReference type="RefSeq" id="WP_002263873.1">
    <property type="nucleotide sequence ID" value="NC_004350.2"/>
</dbReference>
<dbReference type="SMR" id="Q8DTQ3"/>
<dbReference type="STRING" id="210007.SMU_1276c"/>
<dbReference type="KEGG" id="smu:SMU_1276c"/>
<dbReference type="PATRIC" id="fig|210007.7.peg.1144"/>
<dbReference type="eggNOG" id="COG4477">
    <property type="taxonomic scope" value="Bacteria"/>
</dbReference>
<dbReference type="HOGENOM" id="CLU_034079_2_0_9"/>
<dbReference type="OrthoDB" id="1654473at2"/>
<dbReference type="PhylomeDB" id="Q8DTQ3"/>
<dbReference type="Proteomes" id="UP000002512">
    <property type="component" value="Chromosome"/>
</dbReference>
<dbReference type="GO" id="GO:0005886">
    <property type="term" value="C:plasma membrane"/>
    <property type="evidence" value="ECO:0007669"/>
    <property type="project" value="UniProtKB-SubCell"/>
</dbReference>
<dbReference type="GO" id="GO:0005940">
    <property type="term" value="C:septin ring"/>
    <property type="evidence" value="ECO:0007669"/>
    <property type="project" value="InterPro"/>
</dbReference>
<dbReference type="GO" id="GO:0000917">
    <property type="term" value="P:division septum assembly"/>
    <property type="evidence" value="ECO:0007669"/>
    <property type="project" value="UniProtKB-KW"/>
</dbReference>
<dbReference type="GO" id="GO:0000921">
    <property type="term" value="P:septin ring assembly"/>
    <property type="evidence" value="ECO:0007669"/>
    <property type="project" value="InterPro"/>
</dbReference>
<dbReference type="HAMAP" id="MF_00728">
    <property type="entry name" value="EzrA"/>
    <property type="match status" value="1"/>
</dbReference>
<dbReference type="InterPro" id="IPR010379">
    <property type="entry name" value="EzrA"/>
</dbReference>
<dbReference type="NCBIfam" id="NF003407">
    <property type="entry name" value="PRK04778.1-1"/>
    <property type="match status" value="1"/>
</dbReference>
<dbReference type="NCBIfam" id="NF003410">
    <property type="entry name" value="PRK04778.1-4"/>
    <property type="match status" value="1"/>
</dbReference>
<dbReference type="Pfam" id="PF06160">
    <property type="entry name" value="EzrA"/>
    <property type="match status" value="1"/>
</dbReference>